<name>HIS8_XANP2</name>
<accession>A7ICA9</accession>
<comment type="catalytic activity">
    <reaction evidence="1">
        <text>L-histidinol phosphate + 2-oxoglutarate = 3-(imidazol-4-yl)-2-oxopropyl phosphate + L-glutamate</text>
        <dbReference type="Rhea" id="RHEA:23744"/>
        <dbReference type="ChEBI" id="CHEBI:16810"/>
        <dbReference type="ChEBI" id="CHEBI:29985"/>
        <dbReference type="ChEBI" id="CHEBI:57766"/>
        <dbReference type="ChEBI" id="CHEBI:57980"/>
        <dbReference type="EC" id="2.6.1.9"/>
    </reaction>
</comment>
<comment type="cofactor">
    <cofactor evidence="1">
        <name>pyridoxal 5'-phosphate</name>
        <dbReference type="ChEBI" id="CHEBI:597326"/>
    </cofactor>
</comment>
<comment type="pathway">
    <text evidence="1">Amino-acid biosynthesis; L-histidine biosynthesis; L-histidine from 5-phospho-alpha-D-ribose 1-diphosphate: step 7/9.</text>
</comment>
<comment type="subunit">
    <text evidence="1">Homodimer.</text>
</comment>
<comment type="similarity">
    <text evidence="1">Belongs to the class-II pyridoxal-phosphate-dependent aminotransferase family. Histidinol-phosphate aminotransferase subfamily.</text>
</comment>
<gene>
    <name evidence="1" type="primary">hisC</name>
    <name type="ordered locus">Xaut_0394</name>
</gene>
<reference key="1">
    <citation type="submission" date="2007-07" db="EMBL/GenBank/DDBJ databases">
        <title>Complete sequence of chromosome of Xanthobacter autotrophicus Py2.</title>
        <authorList>
            <consortium name="US DOE Joint Genome Institute"/>
            <person name="Copeland A."/>
            <person name="Lucas S."/>
            <person name="Lapidus A."/>
            <person name="Barry K."/>
            <person name="Glavina del Rio T."/>
            <person name="Hammon N."/>
            <person name="Israni S."/>
            <person name="Dalin E."/>
            <person name="Tice H."/>
            <person name="Pitluck S."/>
            <person name="Sims D."/>
            <person name="Brettin T."/>
            <person name="Bruce D."/>
            <person name="Detter J.C."/>
            <person name="Han C."/>
            <person name="Tapia R."/>
            <person name="Brainard J."/>
            <person name="Schmutz J."/>
            <person name="Larimer F."/>
            <person name="Land M."/>
            <person name="Hauser L."/>
            <person name="Kyrpides N."/>
            <person name="Kim E."/>
            <person name="Ensigns S.A."/>
            <person name="Richardson P."/>
        </authorList>
    </citation>
    <scope>NUCLEOTIDE SEQUENCE [LARGE SCALE GENOMIC DNA]</scope>
    <source>
        <strain>ATCC BAA-1158 / Py2</strain>
    </source>
</reference>
<proteinExistence type="inferred from homology"/>
<feature type="chain" id="PRO_1000135432" description="Histidinol-phosphate aminotransferase">
    <location>
        <begin position="1"/>
        <end position="392"/>
    </location>
</feature>
<feature type="region of interest" description="Disordered" evidence="2">
    <location>
        <begin position="1"/>
        <end position="24"/>
    </location>
</feature>
<feature type="modified residue" description="N6-(pyridoxal phosphate)lysine" evidence="1">
    <location>
        <position position="236"/>
    </location>
</feature>
<dbReference type="EC" id="2.6.1.9" evidence="1"/>
<dbReference type="EMBL" id="CP000781">
    <property type="protein sequence ID" value="ABS65652.1"/>
    <property type="molecule type" value="Genomic_DNA"/>
</dbReference>
<dbReference type="SMR" id="A7ICA9"/>
<dbReference type="STRING" id="78245.Xaut_0394"/>
<dbReference type="KEGG" id="xau:Xaut_0394"/>
<dbReference type="eggNOG" id="COG0079">
    <property type="taxonomic scope" value="Bacteria"/>
</dbReference>
<dbReference type="HOGENOM" id="CLU_017584_3_3_5"/>
<dbReference type="OrthoDB" id="9809616at2"/>
<dbReference type="PhylomeDB" id="A7ICA9"/>
<dbReference type="UniPathway" id="UPA00031">
    <property type="reaction ID" value="UER00012"/>
</dbReference>
<dbReference type="Proteomes" id="UP000002417">
    <property type="component" value="Chromosome"/>
</dbReference>
<dbReference type="GO" id="GO:0004400">
    <property type="term" value="F:histidinol-phosphate transaminase activity"/>
    <property type="evidence" value="ECO:0007669"/>
    <property type="project" value="UniProtKB-UniRule"/>
</dbReference>
<dbReference type="GO" id="GO:0030170">
    <property type="term" value="F:pyridoxal phosphate binding"/>
    <property type="evidence" value="ECO:0007669"/>
    <property type="project" value="InterPro"/>
</dbReference>
<dbReference type="GO" id="GO:0000105">
    <property type="term" value="P:L-histidine biosynthetic process"/>
    <property type="evidence" value="ECO:0007669"/>
    <property type="project" value="UniProtKB-UniRule"/>
</dbReference>
<dbReference type="CDD" id="cd00609">
    <property type="entry name" value="AAT_like"/>
    <property type="match status" value="1"/>
</dbReference>
<dbReference type="Gene3D" id="3.90.1150.10">
    <property type="entry name" value="Aspartate Aminotransferase, domain 1"/>
    <property type="match status" value="1"/>
</dbReference>
<dbReference type="Gene3D" id="3.40.640.10">
    <property type="entry name" value="Type I PLP-dependent aspartate aminotransferase-like (Major domain)"/>
    <property type="match status" value="1"/>
</dbReference>
<dbReference type="HAMAP" id="MF_01023">
    <property type="entry name" value="HisC_aminotrans_2"/>
    <property type="match status" value="1"/>
</dbReference>
<dbReference type="InterPro" id="IPR004839">
    <property type="entry name" value="Aminotransferase_I/II_large"/>
</dbReference>
<dbReference type="InterPro" id="IPR005861">
    <property type="entry name" value="HisP_aminotrans"/>
</dbReference>
<dbReference type="InterPro" id="IPR050106">
    <property type="entry name" value="HistidinolP_aminotransfase"/>
</dbReference>
<dbReference type="InterPro" id="IPR015424">
    <property type="entry name" value="PyrdxlP-dep_Trfase"/>
</dbReference>
<dbReference type="InterPro" id="IPR015421">
    <property type="entry name" value="PyrdxlP-dep_Trfase_major"/>
</dbReference>
<dbReference type="InterPro" id="IPR015422">
    <property type="entry name" value="PyrdxlP-dep_Trfase_small"/>
</dbReference>
<dbReference type="NCBIfam" id="TIGR01141">
    <property type="entry name" value="hisC"/>
    <property type="match status" value="1"/>
</dbReference>
<dbReference type="PANTHER" id="PTHR43643:SF3">
    <property type="entry name" value="HISTIDINOL-PHOSPHATE AMINOTRANSFERASE"/>
    <property type="match status" value="1"/>
</dbReference>
<dbReference type="PANTHER" id="PTHR43643">
    <property type="entry name" value="HISTIDINOL-PHOSPHATE AMINOTRANSFERASE 2"/>
    <property type="match status" value="1"/>
</dbReference>
<dbReference type="Pfam" id="PF00155">
    <property type="entry name" value="Aminotran_1_2"/>
    <property type="match status" value="1"/>
</dbReference>
<dbReference type="SUPFAM" id="SSF53383">
    <property type="entry name" value="PLP-dependent transferases"/>
    <property type="match status" value="1"/>
</dbReference>
<evidence type="ECO:0000255" key="1">
    <source>
        <dbReference type="HAMAP-Rule" id="MF_01023"/>
    </source>
</evidence>
<evidence type="ECO:0000256" key="2">
    <source>
        <dbReference type="SAM" id="MobiDB-lite"/>
    </source>
</evidence>
<sequence>MSAVLKDPIPAPGRPESTRPEPRPGVLAIEAYVPGKSHAPGVEKVFKLSSNETPLGPSEKAVAAFAEAGRKLEDYPDGSATVLRQAIATAYGLDPARIICGAGSDEILNLVAHTYVGPGDEVIFSEHGFLVYKIATLASGGTPVVARERDLTADVDAILALVTPRTRLVFLANPNNPTGTYLPFDEVRRLHAGLPANVLLVLDAAYAEYVRRNDYETGLELALTADNVLMSRTFSKIHGLAALRIGWAVGPAHVIDAMNRVRGPFNMNTPALLAGAAAIADAAHVEKAVAHNARWLPWLTEQIEGLGLKVTPSVANFLLIHFPDTPGRTAKEADAFLMKRGLVLRQVASYGLPHALRMTVGTEEANHLVVAALADFMSGNSSAGQEAGGKDK</sequence>
<protein>
    <recommendedName>
        <fullName evidence="1">Histidinol-phosphate aminotransferase</fullName>
        <ecNumber evidence="1">2.6.1.9</ecNumber>
    </recommendedName>
    <alternativeName>
        <fullName evidence="1">Imidazole acetol-phosphate transaminase</fullName>
    </alternativeName>
</protein>
<keyword id="KW-0028">Amino-acid biosynthesis</keyword>
<keyword id="KW-0032">Aminotransferase</keyword>
<keyword id="KW-0368">Histidine biosynthesis</keyword>
<keyword id="KW-0663">Pyridoxal phosphate</keyword>
<keyword id="KW-1185">Reference proteome</keyword>
<keyword id="KW-0808">Transferase</keyword>
<organism>
    <name type="scientific">Xanthobacter autotrophicus (strain ATCC BAA-1158 / Py2)</name>
    <dbReference type="NCBI Taxonomy" id="78245"/>
    <lineage>
        <taxon>Bacteria</taxon>
        <taxon>Pseudomonadati</taxon>
        <taxon>Pseudomonadota</taxon>
        <taxon>Alphaproteobacteria</taxon>
        <taxon>Hyphomicrobiales</taxon>
        <taxon>Xanthobacteraceae</taxon>
        <taxon>Xanthobacter</taxon>
    </lineage>
</organism>